<organismHost>
    <name type="scientific">Gallus gallus</name>
    <name type="common">Chicken</name>
    <dbReference type="NCBI Taxonomy" id="9031"/>
</organismHost>
<organism>
    <name type="scientific">Newcastle disease virus (strain Kansas)</name>
    <name type="common">NDV</name>
    <dbReference type="NCBI Taxonomy" id="332244"/>
    <lineage>
        <taxon>Viruses</taxon>
        <taxon>Riboviria</taxon>
        <taxon>Orthornavirae</taxon>
        <taxon>Negarnaviricota</taxon>
        <taxon>Haploviricotina</taxon>
        <taxon>Monjiviricetes</taxon>
        <taxon>Mononegavirales</taxon>
        <taxon>Paramyxoviridae</taxon>
        <taxon>Avulavirinae</taxon>
        <taxon>Orthoavulavirus</taxon>
        <taxon>Orthoavulavirus javaense</taxon>
        <taxon>Avian paramyxovirus 1</taxon>
    </lineage>
</organism>
<keyword id="KW-0002">3D-structure</keyword>
<keyword id="KW-1015">Disulfide bond</keyword>
<keyword id="KW-0325">Glycoprotein</keyword>
<keyword id="KW-0348">Hemagglutinin</keyword>
<keyword id="KW-1032">Host cell membrane</keyword>
<keyword id="KW-1043">Host membrane</keyword>
<keyword id="KW-0945">Host-virus interaction</keyword>
<keyword id="KW-0378">Hydrolase</keyword>
<keyword id="KW-0472">Membrane</keyword>
<keyword id="KW-0735">Signal-anchor</keyword>
<keyword id="KW-0812">Transmembrane</keyword>
<keyword id="KW-1133">Transmembrane helix</keyword>
<keyword id="KW-1161">Viral attachment to host cell</keyword>
<keyword id="KW-0261">Viral envelope protein</keyword>
<keyword id="KW-0946">Virion</keyword>
<keyword id="KW-1160">Virus entry into host cell</keyword>
<proteinExistence type="evidence at protein level"/>
<feature type="chain" id="PRO_0000142614" description="Hemagglutinin-neuraminidase">
    <location>
        <begin position="1"/>
        <end position="577"/>
    </location>
</feature>
<feature type="topological domain" description="Intravirion" evidence="4">
    <location>
        <begin position="1"/>
        <end position="22"/>
    </location>
</feature>
<feature type="transmembrane region" description="Helical" evidence="4">
    <location>
        <begin position="23"/>
        <end position="45"/>
    </location>
</feature>
<feature type="topological domain" description="Virion surface" evidence="4">
    <location>
        <begin position="46"/>
        <end position="571"/>
    </location>
</feature>
<feature type="region of interest" description="Important for interaction with fusion/F protein" evidence="2">
    <location>
        <begin position="124"/>
        <end position="152"/>
    </location>
</feature>
<feature type="region of interest" description="Involved in neuraminidase activity" evidence="2">
    <location>
        <begin position="234"/>
        <end position="239"/>
    </location>
</feature>
<feature type="glycosylation site" description="N-linked (GlcNAc...) asparagine; by host" evidence="4">
    <location>
        <position position="119"/>
    </location>
</feature>
<feature type="glycosylation site" description="N-linked (GlcNAc...) asparagine; by host" evidence="4">
    <location>
        <position position="144"/>
    </location>
</feature>
<feature type="glycosylation site" description="N-linked (GlcNAc...) asparagine; by host" evidence="2">
    <location>
        <position position="341"/>
    </location>
</feature>
<feature type="glycosylation site" description="N-linked (GlcNAc...) asparagine; by host" evidence="2">
    <location>
        <position position="433"/>
    </location>
</feature>
<feature type="glycosylation site" description="N-linked (GlcNAc...) asparagine; by host" evidence="2">
    <location>
        <position position="481"/>
    </location>
</feature>
<feature type="glycosylation site" description="N-linked (GlcNAc...) asparagine; by host" evidence="4">
    <location>
        <position position="538"/>
    </location>
</feature>
<feature type="disulfide bond" evidence="3">
    <location>
        <begin position="172"/>
        <end position="196"/>
    </location>
</feature>
<feature type="disulfide bond" evidence="3">
    <location>
        <begin position="186"/>
        <end position="247"/>
    </location>
</feature>
<feature type="disulfide bond" evidence="3">
    <location>
        <begin position="238"/>
        <end position="251"/>
    </location>
</feature>
<feature type="disulfide bond" evidence="3">
    <location>
        <begin position="344"/>
        <end position="461"/>
    </location>
</feature>
<feature type="disulfide bond" evidence="3">
    <location>
        <begin position="455"/>
        <end position="465"/>
    </location>
</feature>
<feature type="disulfide bond" evidence="3">
    <location>
        <begin position="531"/>
        <end position="542"/>
    </location>
</feature>
<feature type="turn" evidence="6">
    <location>
        <begin position="130"/>
        <end position="134"/>
    </location>
</feature>
<feature type="strand" evidence="6">
    <location>
        <begin position="136"/>
        <end position="138"/>
    </location>
</feature>
<feature type="strand" evidence="6">
    <location>
        <begin position="144"/>
        <end position="146"/>
    </location>
</feature>
<feature type="helix" evidence="6">
    <location>
        <begin position="148"/>
        <end position="150"/>
    </location>
</feature>
<feature type="strand" evidence="6">
    <location>
        <begin position="151"/>
        <end position="153"/>
    </location>
</feature>
<feature type="strand" evidence="6">
    <location>
        <begin position="172"/>
        <end position="180"/>
    </location>
</feature>
<feature type="strand" evidence="6">
    <location>
        <begin position="185"/>
        <end position="195"/>
    </location>
</feature>
<feature type="strand" evidence="6">
    <location>
        <begin position="202"/>
        <end position="213"/>
    </location>
</feature>
<feature type="strand" evidence="6">
    <location>
        <begin position="219"/>
        <end position="229"/>
    </location>
</feature>
<feature type="strand" evidence="7">
    <location>
        <begin position="231"/>
        <end position="233"/>
    </location>
</feature>
<feature type="strand" evidence="6">
    <location>
        <begin position="235"/>
        <end position="243"/>
    </location>
</feature>
<feature type="strand" evidence="6">
    <location>
        <begin position="246"/>
        <end position="253"/>
    </location>
</feature>
<feature type="helix" evidence="6">
    <location>
        <begin position="258"/>
        <end position="263"/>
    </location>
</feature>
<feature type="strand" evidence="6">
    <location>
        <begin position="264"/>
        <end position="266"/>
    </location>
</feature>
<feature type="strand" evidence="6">
    <location>
        <begin position="269"/>
        <end position="276"/>
    </location>
</feature>
<feature type="strand" evidence="6">
    <location>
        <begin position="281"/>
        <end position="285"/>
    </location>
</feature>
<feature type="helix" evidence="6">
    <location>
        <begin position="288"/>
        <end position="291"/>
    </location>
</feature>
<feature type="turn" evidence="6">
    <location>
        <begin position="292"/>
        <end position="294"/>
    </location>
</feature>
<feature type="strand" evidence="6">
    <location>
        <begin position="295"/>
        <end position="300"/>
    </location>
</feature>
<feature type="strand" evidence="6">
    <location>
        <begin position="306"/>
        <end position="308"/>
    </location>
</feature>
<feature type="strand" evidence="6">
    <location>
        <begin position="311"/>
        <end position="320"/>
    </location>
</feature>
<feature type="helix" evidence="6">
    <location>
        <begin position="325"/>
        <end position="330"/>
    </location>
</feature>
<feature type="helix" evidence="6">
    <location>
        <begin position="348"/>
        <end position="357"/>
    </location>
</feature>
<feature type="helix" evidence="6">
    <location>
        <begin position="362"/>
        <end position="364"/>
    </location>
</feature>
<feature type="strand" evidence="6">
    <location>
        <begin position="368"/>
        <end position="377"/>
    </location>
</feature>
<feature type="strand" evidence="6">
    <location>
        <begin position="379"/>
        <end position="381"/>
    </location>
</feature>
<feature type="strand" evidence="6">
    <location>
        <begin position="387"/>
        <end position="389"/>
    </location>
</feature>
<feature type="turn" evidence="6">
    <location>
        <begin position="393"/>
        <end position="395"/>
    </location>
</feature>
<feature type="strand" evidence="6">
    <location>
        <begin position="402"/>
        <end position="407"/>
    </location>
</feature>
<feature type="strand" evidence="6">
    <location>
        <begin position="410"/>
        <end position="415"/>
    </location>
</feature>
<feature type="strand" evidence="6">
    <location>
        <begin position="423"/>
        <end position="432"/>
    </location>
</feature>
<feature type="strand" evidence="6">
    <location>
        <begin position="435"/>
        <end position="438"/>
    </location>
</feature>
<feature type="strand" evidence="6">
    <location>
        <begin position="442"/>
        <end position="444"/>
    </location>
</feature>
<feature type="strand" evidence="6">
    <location>
        <begin position="473"/>
        <end position="478"/>
    </location>
</feature>
<feature type="strand" evidence="6">
    <location>
        <begin position="484"/>
        <end position="492"/>
    </location>
</feature>
<feature type="strand" evidence="6">
    <location>
        <begin position="495"/>
        <end position="499"/>
    </location>
</feature>
<feature type="strand" evidence="6">
    <location>
        <begin position="501"/>
        <end position="506"/>
    </location>
</feature>
<feature type="strand" evidence="7">
    <location>
        <begin position="515"/>
        <end position="517"/>
    </location>
</feature>
<feature type="strand" evidence="6">
    <location>
        <begin position="523"/>
        <end position="534"/>
    </location>
</feature>
<feature type="turn" evidence="6">
    <location>
        <begin position="535"/>
        <end position="538"/>
    </location>
</feature>
<feature type="strand" evidence="6">
    <location>
        <begin position="539"/>
        <end position="549"/>
    </location>
</feature>
<feature type="helix" evidence="6">
    <location>
        <begin position="551"/>
        <end position="553"/>
    </location>
</feature>
<feature type="strand" evidence="6">
    <location>
        <begin position="557"/>
        <end position="567"/>
    </location>
</feature>
<accession>Q9Q2W5</accession>
<reference key="1">
    <citation type="journal article" date="2000" name="Virology">
        <title>Crystallization of Newcastle disease virus hemagglutinin-neuraminidase glycoprotein.</title>
        <authorList>
            <person name="Takimoto T."/>
            <person name="Taylor G.L."/>
            <person name="Crennell S.J."/>
            <person name="Scroggs R.A."/>
            <person name="Portner A."/>
        </authorList>
    </citation>
    <scope>NUCLEOTIDE SEQUENCE [GENOMIC RNA]</scope>
</reference>
<reference key="2">
    <citation type="journal article" date="2000" name="Nat. Struct. Biol.">
        <title>Crystal structure of the multifunctional paramyxovirus hemagglutinin-neuraminidase.</title>
        <authorList>
            <person name="Crennell S."/>
            <person name="Takimoto T."/>
            <person name="Portner A."/>
            <person name="Taylor G."/>
        </authorList>
    </citation>
    <scope>X-RAY CRYSTALLOGRAPHY (2.0 ANGSTROMS) OF 124-577</scope>
</reference>
<gene>
    <name type="primary">HN</name>
</gene>
<evidence type="ECO:0000250" key="1">
    <source>
        <dbReference type="UniProtKB" id="P04853"/>
    </source>
</evidence>
<evidence type="ECO:0000250" key="2">
    <source>
        <dbReference type="UniProtKB" id="Q91UL0"/>
    </source>
</evidence>
<evidence type="ECO:0000250" key="3">
    <source>
        <dbReference type="UniProtKB" id="Q9WAF5"/>
    </source>
</evidence>
<evidence type="ECO:0000255" key="4"/>
<evidence type="ECO:0000305" key="5"/>
<evidence type="ECO:0007829" key="6">
    <source>
        <dbReference type="PDB" id="1E8U"/>
    </source>
</evidence>
<evidence type="ECO:0007829" key="7">
    <source>
        <dbReference type="PDB" id="1E8V"/>
    </source>
</evidence>
<protein>
    <recommendedName>
        <fullName>Hemagglutinin-neuraminidase</fullName>
        <ecNumber evidence="3">3.2.1.18</ecNumber>
    </recommendedName>
</protein>
<sequence length="577" mass="63111">MDRAVSQVALENDEREAKNTWRLIFRIAILLLTVVTLATSVASLVYSMGASTPSDLVGIPTRISRAEEKITSALGSNQDVVDRIYKQVALESPLALLNTETTIMNAITSLSYQINGAANNSGWGAPIHDPDFIGGIGKELIVDNASDVTSFYPSAFQEHLNFIPAPTTGSGCTRIPSFDMSATHYCYTHNVILSGCRDHSHSHQYLALGVLRTTATGRIFFSTLRSISLDDTQNRKSCSVSATPLGCDMLCSKVTETEEEDYNSAVPTLMAHGRLGFDGQYHEKDLDVTTLFEDWVANYPGVGGGSFIDGRVWFSVYGGLKPNSPSDTVQEGKYVIYKRYNDTCPDEQDYQIRMAKSSYKPGRFGGKRIQQAILSIKVSTSLGEDPVLTVPPNTVTLMGAEGRILTVGTSHFLYQRGSSYFSPALLYPMTVSNKTATLHSPYTFNAFTRPGSIPCQASARCPNSCVTGVYTDPYPLIFYRNHTLRGVFGTMLDSEQARLNPASAVFDSTSRSRITRVSSSSTKAAYTTSTCFKVVKTNKTYCLSIAEISNTLFGEFRIVPLLVEILKNDGVREARSG</sequence>
<comment type="function">
    <text evidence="2">Mediates the viral entry into the host cell together with fusion/F protein. Attaches the virus to sialic acid-containing cell receptors and thereby initiates infection. Binding of HN protein to the receptor induces a conformational change that allows the F protein to trigger virion/cell membranes fusion.</text>
</comment>
<comment type="function">
    <text evidence="2">Neuraminidase activity ensures the efficient spread of the virus by dissociating the mature virions from the neuraminic acid containing glycoproteins.</text>
</comment>
<comment type="catalytic activity">
    <reaction evidence="2">
        <text>Hydrolysis of alpha-(2-&gt;3)-, alpha-(2-&gt;6)-, alpha-(2-&gt;8)- glycosidic linkages of terminal sialic acid residues in oligosaccharides, glycoproteins, glycolipids, colominic acid and synthetic substrates.</text>
        <dbReference type="EC" id="3.2.1.18"/>
    </reaction>
</comment>
<comment type="subunit">
    <text evidence="1 2 3">Homotetramer; composed of disulfide-linked homodimers (By similarity). Interacts with F protein trimer (By similarity). Interacts with host CG-1B; this interaction inhibits viral adsorption and replication rather than internalization (By similarity).</text>
</comment>
<comment type="subcellular location">
    <subcellularLocation>
        <location evidence="2">Virion membrane</location>
        <topology evidence="2">Single-pass type II membrane protein</topology>
    </subcellularLocation>
    <subcellularLocation>
        <location evidence="2">Host cell membrane</location>
        <topology evidence="2">Single-pass type II membrane protein</topology>
    </subcellularLocation>
</comment>
<comment type="domain">
    <text evidence="3">The C-terminus (head domain) is involved in binding the cellular receptor.</text>
</comment>
<comment type="similarity">
    <text evidence="5">Belongs to the paramyxoviruses hemagglutinin-neuraminidase family.</text>
</comment>
<name>HN_NDVK</name>
<dbReference type="EC" id="3.2.1.18" evidence="3"/>
<dbReference type="EMBL" id="AF212323">
    <property type="protein sequence ID" value="AAF19984.1"/>
    <property type="molecule type" value="Genomic_RNA"/>
</dbReference>
<dbReference type="PDB" id="1E8T">
    <property type="method" value="X-ray"/>
    <property type="resolution" value="2.50 A"/>
    <property type="chains" value="A/B=124-577"/>
</dbReference>
<dbReference type="PDB" id="1E8U">
    <property type="method" value="X-ray"/>
    <property type="resolution" value="2.00 A"/>
    <property type="chains" value="A/B=124-577"/>
</dbReference>
<dbReference type="PDB" id="1E8V">
    <property type="method" value="X-ray"/>
    <property type="resolution" value="2.00 A"/>
    <property type="chains" value="A/B=124-577"/>
</dbReference>
<dbReference type="PDBsum" id="1E8T"/>
<dbReference type="PDBsum" id="1E8U"/>
<dbReference type="PDBsum" id="1E8V"/>
<dbReference type="SMR" id="Q9Q2W5"/>
<dbReference type="CAZy" id="GH83">
    <property type="family name" value="Glycoside Hydrolase Family 83"/>
</dbReference>
<dbReference type="GlyCosmos" id="Q9Q2W5">
    <property type="glycosylation" value="6 sites, No reported glycans"/>
</dbReference>
<dbReference type="BRENDA" id="3.2.1.18">
    <property type="organism ID" value="3631"/>
</dbReference>
<dbReference type="EvolutionaryTrace" id="Q9Q2W5"/>
<dbReference type="GO" id="GO:0020002">
    <property type="term" value="C:host cell plasma membrane"/>
    <property type="evidence" value="ECO:0007669"/>
    <property type="project" value="UniProtKB-SubCell"/>
</dbReference>
<dbReference type="GO" id="GO:0016020">
    <property type="term" value="C:membrane"/>
    <property type="evidence" value="ECO:0007669"/>
    <property type="project" value="UniProtKB-KW"/>
</dbReference>
<dbReference type="GO" id="GO:0019031">
    <property type="term" value="C:viral envelope"/>
    <property type="evidence" value="ECO:0007669"/>
    <property type="project" value="UniProtKB-KW"/>
</dbReference>
<dbReference type="GO" id="GO:0055036">
    <property type="term" value="C:virion membrane"/>
    <property type="evidence" value="ECO:0007669"/>
    <property type="project" value="UniProtKB-SubCell"/>
</dbReference>
<dbReference type="GO" id="GO:0004308">
    <property type="term" value="F:exo-alpha-sialidase activity"/>
    <property type="evidence" value="ECO:0007669"/>
    <property type="project" value="UniProtKB-EC"/>
</dbReference>
<dbReference type="GO" id="GO:0046789">
    <property type="term" value="F:host cell surface receptor binding"/>
    <property type="evidence" value="ECO:0007669"/>
    <property type="project" value="InterPro"/>
</dbReference>
<dbReference type="GO" id="GO:0046718">
    <property type="term" value="P:symbiont entry into host cell"/>
    <property type="evidence" value="ECO:0007669"/>
    <property type="project" value="UniProtKB-KW"/>
</dbReference>
<dbReference type="GO" id="GO:0019062">
    <property type="term" value="P:virion attachment to host cell"/>
    <property type="evidence" value="ECO:0007669"/>
    <property type="project" value="UniProtKB-KW"/>
</dbReference>
<dbReference type="CDD" id="cd15469">
    <property type="entry name" value="HN"/>
    <property type="match status" value="1"/>
</dbReference>
<dbReference type="FunFam" id="2.120.10.10:FF:000004">
    <property type="entry name" value="Hemagglutinin-neuraminidase"/>
    <property type="match status" value="1"/>
</dbReference>
<dbReference type="Gene3D" id="2.120.10.10">
    <property type="match status" value="1"/>
</dbReference>
<dbReference type="InterPro" id="IPR016285">
    <property type="entry name" value="Hemagglutn-neuramid"/>
</dbReference>
<dbReference type="InterPro" id="IPR000665">
    <property type="entry name" value="Hemagglutn/HN"/>
</dbReference>
<dbReference type="InterPro" id="IPR036278">
    <property type="entry name" value="Sialidase_sf"/>
</dbReference>
<dbReference type="Pfam" id="PF00423">
    <property type="entry name" value="HN"/>
    <property type="match status" value="1"/>
</dbReference>
<dbReference type="PIRSF" id="PIRSF001072">
    <property type="entry name" value="Hemagglut-neuramid_paramyxoV"/>
    <property type="match status" value="1"/>
</dbReference>
<dbReference type="SUPFAM" id="SSF50939">
    <property type="entry name" value="Sialidases"/>
    <property type="match status" value="1"/>
</dbReference>